<organism>
    <name type="scientific">Escherichia coli O157:H7</name>
    <dbReference type="NCBI Taxonomy" id="83334"/>
    <lineage>
        <taxon>Bacteria</taxon>
        <taxon>Pseudomonadati</taxon>
        <taxon>Pseudomonadota</taxon>
        <taxon>Gammaproteobacteria</taxon>
        <taxon>Enterobacterales</taxon>
        <taxon>Enterobacteriaceae</taxon>
        <taxon>Escherichia</taxon>
    </lineage>
</organism>
<keyword id="KW-0131">Cell cycle</keyword>
<keyword id="KW-0132">Cell division</keyword>
<keyword id="KW-1185">Reference proteome</keyword>
<keyword id="KW-0717">Septation</keyword>
<sequence>MSNTPIELKGSSFTLSVVHLHEAEPKVIHQALEDKIAQAPAFLKHAPVVLNVSALEDPVNWSAMHKAVSATGLRVIGVSGCKDAQLKAEIEKMGLPILTEGKEKAPRPAPAPQAPAQNTTPVTKTRLIDTPVRSGQRIYAPQCDLIVTSHVSAGAELIADGNIHVYGMMRGRALAGASGDRETQIFCTNLMAELVSIAGEYWLSDQIPAEFYGKAARLQLVENALTVQPLN</sequence>
<accession>Q8XDN0</accession>
<reference key="1">
    <citation type="journal article" date="2001" name="Nature">
        <title>Genome sequence of enterohaemorrhagic Escherichia coli O157:H7.</title>
        <authorList>
            <person name="Perna N.T."/>
            <person name="Plunkett G. III"/>
            <person name="Burland V."/>
            <person name="Mau B."/>
            <person name="Glasner J.D."/>
            <person name="Rose D.J."/>
            <person name="Mayhew G.F."/>
            <person name="Evans P.S."/>
            <person name="Gregor J."/>
            <person name="Kirkpatrick H.A."/>
            <person name="Posfai G."/>
            <person name="Hackett J."/>
            <person name="Klink S."/>
            <person name="Boutin A."/>
            <person name="Shao Y."/>
            <person name="Miller L."/>
            <person name="Grotbeck E.J."/>
            <person name="Davis N.W."/>
            <person name="Lim A."/>
            <person name="Dimalanta E.T."/>
            <person name="Potamousis K."/>
            <person name="Apodaca J."/>
            <person name="Anantharaman T.S."/>
            <person name="Lin J."/>
            <person name="Yen G."/>
            <person name="Schwartz D.C."/>
            <person name="Welch R.A."/>
            <person name="Blattner F.R."/>
        </authorList>
    </citation>
    <scope>NUCLEOTIDE SEQUENCE [LARGE SCALE GENOMIC DNA]</scope>
    <source>
        <strain>O157:H7 / EDL933 / ATCC 700927 / EHEC</strain>
    </source>
</reference>
<reference key="2">
    <citation type="journal article" date="2001" name="DNA Res.">
        <title>Complete genome sequence of enterohemorrhagic Escherichia coli O157:H7 and genomic comparison with a laboratory strain K-12.</title>
        <authorList>
            <person name="Hayashi T."/>
            <person name="Makino K."/>
            <person name="Ohnishi M."/>
            <person name="Kurokawa K."/>
            <person name="Ishii K."/>
            <person name="Yokoyama K."/>
            <person name="Han C.-G."/>
            <person name="Ohtsubo E."/>
            <person name="Nakayama K."/>
            <person name="Murata T."/>
            <person name="Tanaka M."/>
            <person name="Tobe T."/>
            <person name="Iida T."/>
            <person name="Takami H."/>
            <person name="Honda T."/>
            <person name="Sasakawa C."/>
            <person name="Ogasawara N."/>
            <person name="Yasunaga T."/>
            <person name="Kuhara S."/>
            <person name="Shiba T."/>
            <person name="Hattori M."/>
            <person name="Shinagawa H."/>
        </authorList>
    </citation>
    <scope>NUCLEOTIDE SEQUENCE [LARGE SCALE GENOMIC DNA]</scope>
    <source>
        <strain>O157:H7 / Sakai / RIMD 0509952 / EHEC</strain>
    </source>
</reference>
<proteinExistence type="inferred from homology"/>
<gene>
    <name evidence="1" type="primary">minC</name>
    <name type="ordered locus">Z1938</name>
    <name type="ordered locus">ECs1670</name>
</gene>
<comment type="function">
    <text evidence="1">Cell division inhibitor that blocks the formation of polar Z ring septums. Rapidly oscillates between the poles of the cell to destabilize FtsZ filaments that have formed before they mature into polar Z rings. Prevents FtsZ polymerization.</text>
</comment>
<comment type="subunit">
    <text evidence="1">Interacts with MinD and FtsZ.</text>
</comment>
<comment type="similarity">
    <text evidence="1">Belongs to the MinC family.</text>
</comment>
<protein>
    <recommendedName>
        <fullName>Septum site-determining protein MinC</fullName>
    </recommendedName>
</protein>
<name>MINC_ECO57</name>
<feature type="chain" id="PRO_0000189035" description="Septum site-determining protein MinC">
    <location>
        <begin position="1"/>
        <end position="231"/>
    </location>
</feature>
<feature type="region of interest" description="Disordered" evidence="2">
    <location>
        <begin position="102"/>
        <end position="125"/>
    </location>
</feature>
<dbReference type="EMBL" id="AE005174">
    <property type="protein sequence ID" value="AAG56027.1"/>
    <property type="molecule type" value="Genomic_DNA"/>
</dbReference>
<dbReference type="EMBL" id="BA000007">
    <property type="protein sequence ID" value="BAB35093.1"/>
    <property type="molecule type" value="Genomic_DNA"/>
</dbReference>
<dbReference type="PIR" id="F90837">
    <property type="entry name" value="F90837"/>
</dbReference>
<dbReference type="PIR" id="G85695">
    <property type="entry name" value="G85695"/>
</dbReference>
<dbReference type="RefSeq" id="NP_309697.1">
    <property type="nucleotide sequence ID" value="NC_002695.1"/>
</dbReference>
<dbReference type="RefSeq" id="WP_000072536.1">
    <property type="nucleotide sequence ID" value="NZ_VOAI01000042.1"/>
</dbReference>
<dbReference type="SMR" id="Q8XDN0"/>
<dbReference type="STRING" id="155864.Z1938"/>
<dbReference type="GeneID" id="913203"/>
<dbReference type="GeneID" id="93776258"/>
<dbReference type="KEGG" id="ece:Z1938"/>
<dbReference type="KEGG" id="ecs:ECs_1670"/>
<dbReference type="PATRIC" id="fig|386585.9.peg.1766"/>
<dbReference type="eggNOG" id="COG0850">
    <property type="taxonomic scope" value="Bacteria"/>
</dbReference>
<dbReference type="HOGENOM" id="CLU_067812_0_1_6"/>
<dbReference type="OMA" id="RRDPLWG"/>
<dbReference type="Proteomes" id="UP000000558">
    <property type="component" value="Chromosome"/>
</dbReference>
<dbReference type="Proteomes" id="UP000002519">
    <property type="component" value="Chromosome"/>
</dbReference>
<dbReference type="GO" id="GO:0000902">
    <property type="term" value="P:cell morphogenesis"/>
    <property type="evidence" value="ECO:0007669"/>
    <property type="project" value="InterPro"/>
</dbReference>
<dbReference type="GO" id="GO:0000917">
    <property type="term" value="P:division septum assembly"/>
    <property type="evidence" value="ECO:0007669"/>
    <property type="project" value="UniProtKB-KW"/>
</dbReference>
<dbReference type="GO" id="GO:0051302">
    <property type="term" value="P:regulation of cell division"/>
    <property type="evidence" value="ECO:0007669"/>
    <property type="project" value="InterPro"/>
</dbReference>
<dbReference type="GO" id="GO:1901891">
    <property type="term" value="P:regulation of cell septum assembly"/>
    <property type="evidence" value="ECO:0007669"/>
    <property type="project" value="InterPro"/>
</dbReference>
<dbReference type="FunFam" id="2.160.20.70:FF:000002">
    <property type="entry name" value="Probable septum site-determining protein MinC"/>
    <property type="match status" value="1"/>
</dbReference>
<dbReference type="Gene3D" id="2.160.20.70">
    <property type="match status" value="1"/>
</dbReference>
<dbReference type="Gene3D" id="3.30.70.260">
    <property type="match status" value="1"/>
</dbReference>
<dbReference type="HAMAP" id="MF_00267">
    <property type="entry name" value="MinC"/>
    <property type="match status" value="1"/>
</dbReference>
<dbReference type="InterPro" id="IPR016098">
    <property type="entry name" value="CAP/MinC_C"/>
</dbReference>
<dbReference type="InterPro" id="IPR013033">
    <property type="entry name" value="MinC"/>
</dbReference>
<dbReference type="InterPro" id="IPR036145">
    <property type="entry name" value="MinC_C_sf"/>
</dbReference>
<dbReference type="InterPro" id="IPR007874">
    <property type="entry name" value="MinC_N"/>
</dbReference>
<dbReference type="InterPro" id="IPR005526">
    <property type="entry name" value="Septum_form_inhib_MinC_C"/>
</dbReference>
<dbReference type="NCBIfam" id="TIGR01222">
    <property type="entry name" value="minC"/>
    <property type="match status" value="1"/>
</dbReference>
<dbReference type="PANTHER" id="PTHR34108">
    <property type="entry name" value="SEPTUM SITE-DETERMINING PROTEIN MINC"/>
    <property type="match status" value="1"/>
</dbReference>
<dbReference type="PANTHER" id="PTHR34108:SF1">
    <property type="entry name" value="SEPTUM SITE-DETERMINING PROTEIN MINC"/>
    <property type="match status" value="1"/>
</dbReference>
<dbReference type="Pfam" id="PF03775">
    <property type="entry name" value="MinC_C"/>
    <property type="match status" value="1"/>
</dbReference>
<dbReference type="Pfam" id="PF05209">
    <property type="entry name" value="MinC_N"/>
    <property type="match status" value="1"/>
</dbReference>
<dbReference type="SUPFAM" id="SSF63848">
    <property type="entry name" value="Cell-division inhibitor MinC, C-terminal domain"/>
    <property type="match status" value="1"/>
</dbReference>
<evidence type="ECO:0000255" key="1">
    <source>
        <dbReference type="HAMAP-Rule" id="MF_00267"/>
    </source>
</evidence>
<evidence type="ECO:0000256" key="2">
    <source>
        <dbReference type="SAM" id="MobiDB-lite"/>
    </source>
</evidence>